<proteinExistence type="inferred from homology"/>
<keyword id="KW-1003">Cell membrane</keyword>
<keyword id="KW-0472">Membrane</keyword>
<keyword id="KW-0812">Transmembrane</keyword>
<keyword id="KW-1133">Transmembrane helix</keyword>
<organism>
    <name type="scientific">Yersinia pestis bv. Antiqua (strain Angola)</name>
    <dbReference type="NCBI Taxonomy" id="349746"/>
    <lineage>
        <taxon>Bacteria</taxon>
        <taxon>Pseudomonadati</taxon>
        <taxon>Pseudomonadota</taxon>
        <taxon>Gammaproteobacteria</taxon>
        <taxon>Enterobacterales</taxon>
        <taxon>Yersiniaceae</taxon>
        <taxon>Yersinia</taxon>
    </lineage>
</organism>
<reference key="1">
    <citation type="journal article" date="2010" name="J. Bacteriol.">
        <title>Genome sequence of the deep-rooted Yersinia pestis strain Angola reveals new insights into the evolution and pangenome of the plague bacterium.</title>
        <authorList>
            <person name="Eppinger M."/>
            <person name="Worsham P.L."/>
            <person name="Nikolich M.P."/>
            <person name="Riley D.R."/>
            <person name="Sebastian Y."/>
            <person name="Mou S."/>
            <person name="Achtman M."/>
            <person name="Lindler L.E."/>
            <person name="Ravel J."/>
        </authorList>
    </citation>
    <scope>NUCLEOTIDE SEQUENCE [LARGE SCALE GENOMIC DNA]</scope>
    <source>
        <strain>Angola</strain>
    </source>
</reference>
<protein>
    <recommendedName>
        <fullName evidence="1">UPF0370 protein YpAngola_A3139</fullName>
    </recommendedName>
</protein>
<comment type="subcellular location">
    <subcellularLocation>
        <location evidence="1">Cell membrane</location>
        <topology evidence="1">Single-pass membrane protein</topology>
    </subcellularLocation>
</comment>
<comment type="similarity">
    <text evidence="1">Belongs to the UPF0370 family.</text>
</comment>
<dbReference type="EMBL" id="CP000901">
    <property type="protein sequence ID" value="ABX85487.1"/>
    <property type="molecule type" value="Genomic_DNA"/>
</dbReference>
<dbReference type="RefSeq" id="WP_002208551.1">
    <property type="nucleotide sequence ID" value="NZ_CP009935.1"/>
</dbReference>
<dbReference type="SMR" id="A9R2H5"/>
<dbReference type="KEGG" id="ypg:YpAngola_A3139"/>
<dbReference type="PATRIC" id="fig|349746.12.peg.4199"/>
<dbReference type="GO" id="GO:0005886">
    <property type="term" value="C:plasma membrane"/>
    <property type="evidence" value="ECO:0007669"/>
    <property type="project" value="UniProtKB-SubCell"/>
</dbReference>
<dbReference type="HAMAP" id="MF_01566">
    <property type="entry name" value="UPF0370"/>
    <property type="match status" value="1"/>
</dbReference>
<dbReference type="InterPro" id="IPR020910">
    <property type="entry name" value="UPF0370"/>
</dbReference>
<dbReference type="NCBIfam" id="NF010185">
    <property type="entry name" value="PRK13664.1"/>
    <property type="match status" value="1"/>
</dbReference>
<dbReference type="Pfam" id="PF13980">
    <property type="entry name" value="UPF0370"/>
    <property type="match status" value="1"/>
</dbReference>
<sequence length="64" mass="7896">MQWLADYWWIILILLVGMILNGIKELRRLDHKRFLDNKPELPPHRDNNAQWDDEDDWPDQNKKK</sequence>
<evidence type="ECO:0000255" key="1">
    <source>
        <dbReference type="HAMAP-Rule" id="MF_01566"/>
    </source>
</evidence>
<evidence type="ECO:0000256" key="2">
    <source>
        <dbReference type="SAM" id="MobiDB-lite"/>
    </source>
</evidence>
<gene>
    <name type="ordered locus">YpAngola_A3139</name>
</gene>
<feature type="chain" id="PRO_1000199736" description="UPF0370 protein YpAngola_A3139">
    <location>
        <begin position="1"/>
        <end position="64"/>
    </location>
</feature>
<feature type="transmembrane region" description="Helical" evidence="1">
    <location>
        <begin position="3"/>
        <end position="23"/>
    </location>
</feature>
<feature type="region of interest" description="Disordered" evidence="2">
    <location>
        <begin position="36"/>
        <end position="64"/>
    </location>
</feature>
<feature type="compositionally biased region" description="Basic and acidic residues" evidence="2">
    <location>
        <begin position="36"/>
        <end position="47"/>
    </location>
</feature>
<name>Y3139_YERPG</name>
<accession>A9R2H5</accession>